<sequence length="394" mass="42202">MAEKRDYYEVLEVTKESTVEEIKKAYRKKAIQYHPDKNPGDKEAEEKFKEAAEAYDVLSNPDKRARYDQFGHAGMSGAAGNGGPFGGFSGGMSMDDIFSMFGDIFGGHSGGGFGGGFGGFGGFGGGGSQQRKFRGSDLRVKVKLNLKEISTGVEKKFKLKKYIPCSHCHGTGAEGNSGSETCPTCKGSGSVIRNQQTILGTMQTRTTCPTCNGEGKIIKDKCKVCGGEGIEYGEEVVTVKIPAGVAEGMQLSMGGKGNAGKHNGIPGDLLILVEEEPHPELIRDENDLVYNLLLSFPTAAIGGAVEIPTIDGKVKVKIEAGTQPGKVLRLRGKGLPSVNGYGTGDLLVNVSVYVPETLSKEEKSTLEKLEESKNFKPSTSIKEKIFKKFRSLFD</sequence>
<protein>
    <recommendedName>
        <fullName evidence="1">Chaperone protein DnaJ</fullName>
    </recommendedName>
</protein>
<evidence type="ECO:0000255" key="1">
    <source>
        <dbReference type="HAMAP-Rule" id="MF_01152"/>
    </source>
</evidence>
<name>DNAJ_BACFR</name>
<organism>
    <name type="scientific">Bacteroides fragilis (strain YCH46)</name>
    <dbReference type="NCBI Taxonomy" id="295405"/>
    <lineage>
        <taxon>Bacteria</taxon>
        <taxon>Pseudomonadati</taxon>
        <taxon>Bacteroidota</taxon>
        <taxon>Bacteroidia</taxon>
        <taxon>Bacteroidales</taxon>
        <taxon>Bacteroidaceae</taxon>
        <taxon>Bacteroides</taxon>
    </lineage>
</organism>
<reference key="1">
    <citation type="journal article" date="2004" name="Proc. Natl. Acad. Sci. U.S.A.">
        <title>Genomic analysis of Bacteroides fragilis reveals extensive DNA inversions regulating cell surface adaptation.</title>
        <authorList>
            <person name="Kuwahara T."/>
            <person name="Yamashita A."/>
            <person name="Hirakawa H."/>
            <person name="Nakayama H."/>
            <person name="Toh H."/>
            <person name="Okada N."/>
            <person name="Kuhara S."/>
            <person name="Hattori M."/>
            <person name="Hayashi T."/>
            <person name="Ohnishi Y."/>
        </authorList>
    </citation>
    <scope>NUCLEOTIDE SEQUENCE [LARGE SCALE GENOMIC DNA]</scope>
    <source>
        <strain>YCH46</strain>
    </source>
</reference>
<feature type="chain" id="PRO_0000070720" description="Chaperone protein DnaJ">
    <location>
        <begin position="1"/>
        <end position="394"/>
    </location>
</feature>
<feature type="domain" description="J" evidence="1">
    <location>
        <begin position="6"/>
        <end position="71"/>
    </location>
</feature>
<feature type="repeat" description="CXXCXGXG motif">
    <location>
        <begin position="165"/>
        <end position="172"/>
    </location>
</feature>
<feature type="repeat" description="CXXCXGXG motif">
    <location>
        <begin position="182"/>
        <end position="189"/>
    </location>
</feature>
<feature type="repeat" description="CXXCXGXG motif">
    <location>
        <begin position="208"/>
        <end position="215"/>
    </location>
</feature>
<feature type="repeat" description="CXXCXGXG motif">
    <location>
        <begin position="222"/>
        <end position="229"/>
    </location>
</feature>
<feature type="zinc finger region" description="CR-type" evidence="1">
    <location>
        <begin position="152"/>
        <end position="234"/>
    </location>
</feature>
<feature type="binding site" evidence="1">
    <location>
        <position position="165"/>
    </location>
    <ligand>
        <name>Zn(2+)</name>
        <dbReference type="ChEBI" id="CHEBI:29105"/>
        <label>1</label>
    </ligand>
</feature>
<feature type="binding site" evidence="1">
    <location>
        <position position="168"/>
    </location>
    <ligand>
        <name>Zn(2+)</name>
        <dbReference type="ChEBI" id="CHEBI:29105"/>
        <label>1</label>
    </ligand>
</feature>
<feature type="binding site" evidence="1">
    <location>
        <position position="182"/>
    </location>
    <ligand>
        <name>Zn(2+)</name>
        <dbReference type="ChEBI" id="CHEBI:29105"/>
        <label>2</label>
    </ligand>
</feature>
<feature type="binding site" evidence="1">
    <location>
        <position position="185"/>
    </location>
    <ligand>
        <name>Zn(2+)</name>
        <dbReference type="ChEBI" id="CHEBI:29105"/>
        <label>2</label>
    </ligand>
</feature>
<feature type="binding site" evidence="1">
    <location>
        <position position="208"/>
    </location>
    <ligand>
        <name>Zn(2+)</name>
        <dbReference type="ChEBI" id="CHEBI:29105"/>
        <label>2</label>
    </ligand>
</feature>
<feature type="binding site" evidence="1">
    <location>
        <position position="211"/>
    </location>
    <ligand>
        <name>Zn(2+)</name>
        <dbReference type="ChEBI" id="CHEBI:29105"/>
        <label>2</label>
    </ligand>
</feature>
<feature type="binding site" evidence="1">
    <location>
        <position position="222"/>
    </location>
    <ligand>
        <name>Zn(2+)</name>
        <dbReference type="ChEBI" id="CHEBI:29105"/>
        <label>1</label>
    </ligand>
</feature>
<feature type="binding site" evidence="1">
    <location>
        <position position="225"/>
    </location>
    <ligand>
        <name>Zn(2+)</name>
        <dbReference type="ChEBI" id="CHEBI:29105"/>
        <label>1</label>
    </ligand>
</feature>
<proteinExistence type="inferred from homology"/>
<gene>
    <name evidence="1" type="primary">dnaJ</name>
    <name type="ordered locus">BF1742</name>
</gene>
<keyword id="KW-0143">Chaperone</keyword>
<keyword id="KW-0963">Cytoplasm</keyword>
<keyword id="KW-0235">DNA replication</keyword>
<keyword id="KW-0479">Metal-binding</keyword>
<keyword id="KW-0677">Repeat</keyword>
<keyword id="KW-0346">Stress response</keyword>
<keyword id="KW-0862">Zinc</keyword>
<keyword id="KW-0863">Zinc-finger</keyword>
<dbReference type="EMBL" id="AP006841">
    <property type="protein sequence ID" value="BAD48489.1"/>
    <property type="molecule type" value="Genomic_DNA"/>
</dbReference>
<dbReference type="RefSeq" id="WP_011202549.1">
    <property type="nucleotide sequence ID" value="NC_006347.1"/>
</dbReference>
<dbReference type="RefSeq" id="YP_099023.1">
    <property type="nucleotide sequence ID" value="NC_006347.1"/>
</dbReference>
<dbReference type="SMR" id="Q64VI7"/>
<dbReference type="STRING" id="295405.BF1742"/>
<dbReference type="KEGG" id="bfr:BF1742"/>
<dbReference type="PATRIC" id="fig|295405.11.peg.1691"/>
<dbReference type="HOGENOM" id="CLU_017633_0_7_10"/>
<dbReference type="OrthoDB" id="9779889at2"/>
<dbReference type="Proteomes" id="UP000002197">
    <property type="component" value="Chromosome"/>
</dbReference>
<dbReference type="GO" id="GO:0005737">
    <property type="term" value="C:cytoplasm"/>
    <property type="evidence" value="ECO:0007669"/>
    <property type="project" value="UniProtKB-SubCell"/>
</dbReference>
<dbReference type="GO" id="GO:0005524">
    <property type="term" value="F:ATP binding"/>
    <property type="evidence" value="ECO:0007669"/>
    <property type="project" value="InterPro"/>
</dbReference>
<dbReference type="GO" id="GO:0031072">
    <property type="term" value="F:heat shock protein binding"/>
    <property type="evidence" value="ECO:0007669"/>
    <property type="project" value="InterPro"/>
</dbReference>
<dbReference type="GO" id="GO:0051082">
    <property type="term" value="F:unfolded protein binding"/>
    <property type="evidence" value="ECO:0007669"/>
    <property type="project" value="UniProtKB-UniRule"/>
</dbReference>
<dbReference type="GO" id="GO:0008270">
    <property type="term" value="F:zinc ion binding"/>
    <property type="evidence" value="ECO:0007669"/>
    <property type="project" value="UniProtKB-UniRule"/>
</dbReference>
<dbReference type="GO" id="GO:0051085">
    <property type="term" value="P:chaperone cofactor-dependent protein refolding"/>
    <property type="evidence" value="ECO:0007669"/>
    <property type="project" value="TreeGrafter"/>
</dbReference>
<dbReference type="GO" id="GO:0006260">
    <property type="term" value="P:DNA replication"/>
    <property type="evidence" value="ECO:0007669"/>
    <property type="project" value="UniProtKB-KW"/>
</dbReference>
<dbReference type="GO" id="GO:0042026">
    <property type="term" value="P:protein refolding"/>
    <property type="evidence" value="ECO:0007669"/>
    <property type="project" value="TreeGrafter"/>
</dbReference>
<dbReference type="GO" id="GO:0009408">
    <property type="term" value="P:response to heat"/>
    <property type="evidence" value="ECO:0007669"/>
    <property type="project" value="InterPro"/>
</dbReference>
<dbReference type="CDD" id="cd06257">
    <property type="entry name" value="DnaJ"/>
    <property type="match status" value="1"/>
</dbReference>
<dbReference type="CDD" id="cd10747">
    <property type="entry name" value="DnaJ_C"/>
    <property type="match status" value="1"/>
</dbReference>
<dbReference type="FunFam" id="1.10.287.110:FF:000034">
    <property type="entry name" value="Chaperone protein DnaJ"/>
    <property type="match status" value="1"/>
</dbReference>
<dbReference type="FunFam" id="2.60.260.20:FF:000005">
    <property type="entry name" value="Chaperone protein dnaJ 1, mitochondrial"/>
    <property type="match status" value="1"/>
</dbReference>
<dbReference type="FunFam" id="2.10.230.10:FF:000002">
    <property type="entry name" value="Molecular chaperone DnaJ"/>
    <property type="match status" value="1"/>
</dbReference>
<dbReference type="Gene3D" id="1.10.287.110">
    <property type="entry name" value="DnaJ domain"/>
    <property type="match status" value="1"/>
</dbReference>
<dbReference type="Gene3D" id="2.10.230.10">
    <property type="entry name" value="Heat shock protein DnaJ, cysteine-rich domain"/>
    <property type="match status" value="1"/>
</dbReference>
<dbReference type="Gene3D" id="2.60.260.20">
    <property type="entry name" value="Urease metallochaperone UreE, N-terminal domain"/>
    <property type="match status" value="2"/>
</dbReference>
<dbReference type="HAMAP" id="MF_01152">
    <property type="entry name" value="DnaJ"/>
    <property type="match status" value="1"/>
</dbReference>
<dbReference type="InterPro" id="IPR012724">
    <property type="entry name" value="DnaJ"/>
</dbReference>
<dbReference type="InterPro" id="IPR002939">
    <property type="entry name" value="DnaJ_C"/>
</dbReference>
<dbReference type="InterPro" id="IPR001623">
    <property type="entry name" value="DnaJ_domain"/>
</dbReference>
<dbReference type="InterPro" id="IPR018253">
    <property type="entry name" value="DnaJ_domain_CS"/>
</dbReference>
<dbReference type="InterPro" id="IPR008971">
    <property type="entry name" value="HSP40/DnaJ_pept-bd"/>
</dbReference>
<dbReference type="InterPro" id="IPR001305">
    <property type="entry name" value="HSP_DnaJ_Cys-rich_dom"/>
</dbReference>
<dbReference type="InterPro" id="IPR036410">
    <property type="entry name" value="HSP_DnaJ_Cys-rich_dom_sf"/>
</dbReference>
<dbReference type="InterPro" id="IPR036869">
    <property type="entry name" value="J_dom_sf"/>
</dbReference>
<dbReference type="NCBIfam" id="TIGR02349">
    <property type="entry name" value="DnaJ_bact"/>
    <property type="match status" value="1"/>
</dbReference>
<dbReference type="NCBIfam" id="NF008035">
    <property type="entry name" value="PRK10767.1"/>
    <property type="match status" value="1"/>
</dbReference>
<dbReference type="NCBIfam" id="NF010882">
    <property type="entry name" value="PRK14289.1"/>
    <property type="match status" value="1"/>
</dbReference>
<dbReference type="PANTHER" id="PTHR43096:SF48">
    <property type="entry name" value="CHAPERONE PROTEIN DNAJ"/>
    <property type="match status" value="1"/>
</dbReference>
<dbReference type="PANTHER" id="PTHR43096">
    <property type="entry name" value="DNAJ HOMOLOG 1, MITOCHONDRIAL-RELATED"/>
    <property type="match status" value="1"/>
</dbReference>
<dbReference type="Pfam" id="PF00226">
    <property type="entry name" value="DnaJ"/>
    <property type="match status" value="1"/>
</dbReference>
<dbReference type="Pfam" id="PF01556">
    <property type="entry name" value="DnaJ_C"/>
    <property type="match status" value="1"/>
</dbReference>
<dbReference type="Pfam" id="PF00684">
    <property type="entry name" value="DnaJ_CXXCXGXG"/>
    <property type="match status" value="1"/>
</dbReference>
<dbReference type="PRINTS" id="PR00625">
    <property type="entry name" value="JDOMAIN"/>
</dbReference>
<dbReference type="SMART" id="SM00271">
    <property type="entry name" value="DnaJ"/>
    <property type="match status" value="1"/>
</dbReference>
<dbReference type="SUPFAM" id="SSF46565">
    <property type="entry name" value="Chaperone J-domain"/>
    <property type="match status" value="1"/>
</dbReference>
<dbReference type="SUPFAM" id="SSF57938">
    <property type="entry name" value="DnaJ/Hsp40 cysteine-rich domain"/>
    <property type="match status" value="1"/>
</dbReference>
<dbReference type="SUPFAM" id="SSF49493">
    <property type="entry name" value="HSP40/DnaJ peptide-binding domain"/>
    <property type="match status" value="2"/>
</dbReference>
<dbReference type="PROSITE" id="PS00636">
    <property type="entry name" value="DNAJ_1"/>
    <property type="match status" value="1"/>
</dbReference>
<dbReference type="PROSITE" id="PS50076">
    <property type="entry name" value="DNAJ_2"/>
    <property type="match status" value="1"/>
</dbReference>
<dbReference type="PROSITE" id="PS51188">
    <property type="entry name" value="ZF_CR"/>
    <property type="match status" value="1"/>
</dbReference>
<comment type="function">
    <text evidence="1">Participates actively in the response to hyperosmotic and heat shock by preventing the aggregation of stress-denatured proteins and by disaggregating proteins, also in an autonomous, DnaK-independent fashion. Unfolded proteins bind initially to DnaJ; upon interaction with the DnaJ-bound protein, DnaK hydrolyzes its bound ATP, resulting in the formation of a stable complex. GrpE releases ADP from DnaK; ATP binding to DnaK triggers the release of the substrate protein, thus completing the reaction cycle. Several rounds of ATP-dependent interactions between DnaJ, DnaK and GrpE are required for fully efficient folding. Also involved, together with DnaK and GrpE, in the DNA replication of plasmids through activation of initiation proteins.</text>
</comment>
<comment type="cofactor">
    <cofactor evidence="1">
        <name>Zn(2+)</name>
        <dbReference type="ChEBI" id="CHEBI:29105"/>
    </cofactor>
    <text evidence="1">Binds 2 Zn(2+) ions per monomer.</text>
</comment>
<comment type="subunit">
    <text evidence="1">Homodimer.</text>
</comment>
<comment type="subcellular location">
    <subcellularLocation>
        <location evidence="1">Cytoplasm</location>
    </subcellularLocation>
</comment>
<comment type="domain">
    <text evidence="1">The J domain is necessary and sufficient to stimulate DnaK ATPase activity. Zinc center 1 plays an important role in the autonomous, DnaK-independent chaperone activity of DnaJ. Zinc center 2 is essential for interaction with DnaK and for DnaJ activity.</text>
</comment>
<comment type="similarity">
    <text evidence="1">Belongs to the DnaJ family.</text>
</comment>
<accession>Q64VI7</accession>